<accession>P9WQH8</accession>
<accession>L0T824</accession>
<accession>P63405</accession>
<accession>Q10561</accession>
<reference key="1">
    <citation type="journal article" date="2002" name="J. Bacteriol.">
        <title>Whole-genome comparison of Mycobacterium tuberculosis clinical and laboratory strains.</title>
        <authorList>
            <person name="Fleischmann R.D."/>
            <person name="Alland D."/>
            <person name="Eisen J.A."/>
            <person name="Carpenter L."/>
            <person name="White O."/>
            <person name="Peterson J.D."/>
            <person name="DeBoy R.T."/>
            <person name="Dodson R.J."/>
            <person name="Gwinn M.L."/>
            <person name="Haft D.H."/>
            <person name="Hickey E.K."/>
            <person name="Kolonay J.F."/>
            <person name="Nelson W.C."/>
            <person name="Umayam L.A."/>
            <person name="Ermolaeva M.D."/>
            <person name="Salzberg S.L."/>
            <person name="Delcher A."/>
            <person name="Utterback T.R."/>
            <person name="Weidman J.F."/>
            <person name="Khouri H.M."/>
            <person name="Gill J."/>
            <person name="Mikula A."/>
            <person name="Bishai W."/>
            <person name="Jacobs W.R. Jr."/>
            <person name="Venter J.C."/>
            <person name="Fraser C.M."/>
        </authorList>
    </citation>
    <scope>NUCLEOTIDE SEQUENCE [LARGE SCALE GENOMIC DNA]</scope>
    <source>
        <strain>CDC 1551 / Oshkosh</strain>
    </source>
</reference>
<organism>
    <name type="scientific">Mycobacterium tuberculosis (strain CDC 1551 / Oshkosh)</name>
    <dbReference type="NCBI Taxonomy" id="83331"/>
    <lineage>
        <taxon>Bacteria</taxon>
        <taxon>Bacillati</taxon>
        <taxon>Actinomycetota</taxon>
        <taxon>Actinomycetes</taxon>
        <taxon>Mycobacteriales</taxon>
        <taxon>Mycobacteriaceae</taxon>
        <taxon>Mycobacterium</taxon>
        <taxon>Mycobacterium tuberculosis complex</taxon>
    </lineage>
</organism>
<proteinExistence type="inferred from homology"/>
<keyword id="KW-1185">Reference proteome</keyword>
<keyword id="KW-0808">Transferase</keyword>
<gene>
    <name type="primary">accD3</name>
    <name type="ordered locus">MT0927</name>
</gene>
<name>ACCD3_MYCTO</name>
<protein>
    <recommendedName>
        <fullName evidence="2">Probable biotin-dependent acyl-coenzyme A carboxylase beta3 subunit</fullName>
        <ecNumber evidence="1">2.1.3.-</ecNumber>
    </recommendedName>
</protein>
<comment type="function">
    <text evidence="1">Component of a biotin-dependent acyl-CoA carboxylase complex. This subunit transfers the CO2 from carboxybiotin to the CoA ester substrate.</text>
</comment>
<comment type="subunit">
    <text evidence="1">The biotin-dependent acyl-CoA carboxylase complex is composed of an AccA protein, which contains the biotin carboxylase (BC) and biotin carboxyl carrier protein (BCCP) domains, and an AccD protein, which contains the carboxyl transferase (CT) domain.</text>
</comment>
<comment type="similarity">
    <text evidence="5">Belongs to the AccD/PCCB family.</text>
</comment>
<feature type="chain" id="PRO_0000426773" description="Probable biotin-dependent acyl-coenzyme A carboxylase beta3 subunit">
    <location>
        <begin position="1"/>
        <end position="495"/>
    </location>
</feature>
<feature type="domain" description="CoA carboxyltransferase N-terminal" evidence="3">
    <location>
        <begin position="1"/>
        <end position="236"/>
    </location>
</feature>
<feature type="domain" description="CoA carboxyltransferase C-terminal" evidence="4">
    <location>
        <begin position="242"/>
        <end position="470"/>
    </location>
</feature>
<evidence type="ECO:0000250" key="1">
    <source>
        <dbReference type="UniProtKB" id="O53578"/>
    </source>
</evidence>
<evidence type="ECO:0000250" key="2">
    <source>
        <dbReference type="UniProtKB" id="P9WQH9"/>
    </source>
</evidence>
<evidence type="ECO:0000255" key="3">
    <source>
        <dbReference type="PROSITE-ProRule" id="PRU01136"/>
    </source>
</evidence>
<evidence type="ECO:0000255" key="4">
    <source>
        <dbReference type="PROSITE-ProRule" id="PRU01137"/>
    </source>
</evidence>
<evidence type="ECO:0000305" key="5"/>
<dbReference type="EC" id="2.1.3.-" evidence="1"/>
<dbReference type="EMBL" id="AE000516">
    <property type="protein sequence ID" value="AAK45174.1"/>
    <property type="molecule type" value="Genomic_DNA"/>
</dbReference>
<dbReference type="PIR" id="E70783">
    <property type="entry name" value="E70783"/>
</dbReference>
<dbReference type="RefSeq" id="WP_003404691.1">
    <property type="nucleotide sequence ID" value="NZ_KK341227.1"/>
</dbReference>
<dbReference type="SMR" id="P9WQH8"/>
<dbReference type="KEGG" id="mtc:MT0927"/>
<dbReference type="PATRIC" id="fig|83331.31.peg.996"/>
<dbReference type="HOGENOM" id="CLU_015486_2_1_11"/>
<dbReference type="Proteomes" id="UP000001020">
    <property type="component" value="Chromosome"/>
</dbReference>
<dbReference type="GO" id="GO:0009317">
    <property type="term" value="C:acetyl-CoA carboxylase complex"/>
    <property type="evidence" value="ECO:0007669"/>
    <property type="project" value="InterPro"/>
</dbReference>
<dbReference type="GO" id="GO:0003989">
    <property type="term" value="F:acetyl-CoA carboxylase activity"/>
    <property type="evidence" value="ECO:0007669"/>
    <property type="project" value="InterPro"/>
</dbReference>
<dbReference type="GO" id="GO:0016740">
    <property type="term" value="F:transferase activity"/>
    <property type="evidence" value="ECO:0007669"/>
    <property type="project" value="UniProtKB-KW"/>
</dbReference>
<dbReference type="GO" id="GO:0006633">
    <property type="term" value="P:fatty acid biosynthetic process"/>
    <property type="evidence" value="ECO:0007669"/>
    <property type="project" value="InterPro"/>
</dbReference>
<dbReference type="GO" id="GO:2001295">
    <property type="term" value="P:malonyl-CoA biosynthetic process"/>
    <property type="evidence" value="ECO:0007669"/>
    <property type="project" value="TreeGrafter"/>
</dbReference>
<dbReference type="FunFam" id="3.90.226.10:FF:000108">
    <property type="entry name" value="Acetyl-coenzyme A carboxylase carboxyl transferase subunit beta"/>
    <property type="match status" value="1"/>
</dbReference>
<dbReference type="Gene3D" id="3.90.226.10">
    <property type="entry name" value="2-enoyl-CoA Hydratase, Chain A, domain 1"/>
    <property type="match status" value="2"/>
</dbReference>
<dbReference type="InterPro" id="IPR034733">
    <property type="entry name" value="AcCoA_carboxyl_beta"/>
</dbReference>
<dbReference type="InterPro" id="IPR000438">
    <property type="entry name" value="Acetyl_CoA_COase_Trfase_b_su"/>
</dbReference>
<dbReference type="InterPro" id="IPR029045">
    <property type="entry name" value="ClpP/crotonase-like_dom_sf"/>
</dbReference>
<dbReference type="InterPro" id="IPR011763">
    <property type="entry name" value="COA_CT_C"/>
</dbReference>
<dbReference type="InterPro" id="IPR011762">
    <property type="entry name" value="COA_CT_N"/>
</dbReference>
<dbReference type="PANTHER" id="PTHR42995">
    <property type="entry name" value="ACETYL-COENZYME A CARBOXYLASE CARBOXYL TRANSFERASE SUBUNIT BETA, CHLOROPLASTIC"/>
    <property type="match status" value="1"/>
</dbReference>
<dbReference type="PANTHER" id="PTHR42995:SF5">
    <property type="entry name" value="ACETYL-COENZYME A CARBOXYLASE CARBOXYL TRANSFERASE SUBUNIT BETA, CHLOROPLASTIC"/>
    <property type="match status" value="1"/>
</dbReference>
<dbReference type="Pfam" id="PF01039">
    <property type="entry name" value="Carboxyl_trans"/>
    <property type="match status" value="1"/>
</dbReference>
<dbReference type="PRINTS" id="PR01070">
    <property type="entry name" value="ACCCTRFRASEB"/>
</dbReference>
<dbReference type="SUPFAM" id="SSF52096">
    <property type="entry name" value="ClpP/crotonase"/>
    <property type="match status" value="2"/>
</dbReference>
<dbReference type="PROSITE" id="PS50989">
    <property type="entry name" value="COA_CT_CTER"/>
    <property type="match status" value="1"/>
</dbReference>
<dbReference type="PROSITE" id="PS50980">
    <property type="entry name" value="COA_CT_NTER"/>
    <property type="match status" value="1"/>
</dbReference>
<sequence>MSRITTDQLRHAVLDRGSFVSWDSEPLAVPVADSYARELAAARAATGADESVQTGEGRVFGRRVAVVACEFDFLGGSIGVAAAERITAAVERATAERLPLLASPSSGGTRMQEGTVAFLQMVKIAAAIQLHNQARLPYLVYLRHPTTGGVFASWGSLGHLTVAEPGALIGFLGPRVYELLYGDPFPSGVQTAENLRRHGIIDGVVALDRLRPMLDRALTVLIDAPEPLPAPQTPAPVPDVPTWDSVVASRRPDRPGVRQLLRHGATDRVLLSGTDQGEAATTLLALARFGGQPTVVLGQQRAVGGGGSTVGPAALREARRGMALAAELCLPLVLVIDAAGPALSAAAEQGGLAGQIAHCLAELVTLDTPTVSILLGQGSGGPALAMLPADRVLAALHGWLAPLPPEGASAIVFRDTAHAAELAAAQGIRSADLLKSGIVDTIVPEYPDAADEPIEFALRLSNAIAAEVHALRKIPAPERLATRLQRYRRIGLPRD</sequence>